<name>PHYDA_ECO55</name>
<proteinExistence type="inferred from homology"/>
<accession>B7LF59</accession>
<dbReference type="EC" id="3.5.2.-" evidence="1"/>
<dbReference type="EMBL" id="CU928145">
    <property type="protein sequence ID" value="CAU99105.1"/>
    <property type="molecule type" value="Genomic_DNA"/>
</dbReference>
<dbReference type="RefSeq" id="WP_001264447.1">
    <property type="nucleotide sequence ID" value="NC_011748.1"/>
</dbReference>
<dbReference type="SMR" id="B7LF59"/>
<dbReference type="KEGG" id="eck:EC55989_3160"/>
<dbReference type="HOGENOM" id="CLU_015572_2_0_6"/>
<dbReference type="Proteomes" id="UP000000746">
    <property type="component" value="Chromosome"/>
</dbReference>
<dbReference type="GO" id="GO:0005829">
    <property type="term" value="C:cytosol"/>
    <property type="evidence" value="ECO:0007669"/>
    <property type="project" value="TreeGrafter"/>
</dbReference>
<dbReference type="GO" id="GO:0016812">
    <property type="term" value="F:hydrolase activity, acting on carbon-nitrogen (but not peptide) bonds, in cyclic amides"/>
    <property type="evidence" value="ECO:0007669"/>
    <property type="project" value="UniProtKB-UniRule"/>
</dbReference>
<dbReference type="GO" id="GO:0046872">
    <property type="term" value="F:metal ion binding"/>
    <property type="evidence" value="ECO:0007669"/>
    <property type="project" value="UniProtKB-KW"/>
</dbReference>
<dbReference type="GO" id="GO:0006208">
    <property type="term" value="P:pyrimidine nucleobase catabolic process"/>
    <property type="evidence" value="ECO:0007669"/>
    <property type="project" value="InterPro"/>
</dbReference>
<dbReference type="CDD" id="cd01314">
    <property type="entry name" value="D-HYD"/>
    <property type="match status" value="1"/>
</dbReference>
<dbReference type="FunFam" id="3.20.20.140:FF:000026">
    <property type="entry name" value="D-phenylhydantoinase"/>
    <property type="match status" value="1"/>
</dbReference>
<dbReference type="Gene3D" id="3.20.20.140">
    <property type="entry name" value="Metal-dependent hydrolases"/>
    <property type="match status" value="1"/>
</dbReference>
<dbReference type="Gene3D" id="2.30.40.10">
    <property type="entry name" value="Urease, subunit C, domain 1"/>
    <property type="match status" value="1"/>
</dbReference>
<dbReference type="HAMAP" id="MF_01644">
    <property type="entry name" value="D_hydantoinase"/>
    <property type="match status" value="1"/>
</dbReference>
<dbReference type="InterPro" id="IPR006680">
    <property type="entry name" value="Amidohydro-rel"/>
</dbReference>
<dbReference type="InterPro" id="IPR023766">
    <property type="entry name" value="D_phenylhydantoinase"/>
</dbReference>
<dbReference type="InterPro" id="IPR011778">
    <property type="entry name" value="Hydantoinase/dihydroPyrase"/>
</dbReference>
<dbReference type="InterPro" id="IPR011059">
    <property type="entry name" value="Metal-dep_hydrolase_composite"/>
</dbReference>
<dbReference type="InterPro" id="IPR032466">
    <property type="entry name" value="Metal_Hydrolase"/>
</dbReference>
<dbReference type="InterPro" id="IPR050378">
    <property type="entry name" value="Metallo-dep_Hydrolases_sf"/>
</dbReference>
<dbReference type="NCBIfam" id="TIGR02033">
    <property type="entry name" value="D-hydantoinase"/>
    <property type="match status" value="1"/>
</dbReference>
<dbReference type="PANTHER" id="PTHR11647:SF1">
    <property type="entry name" value="COLLAPSIN RESPONSE MEDIATOR PROTEIN"/>
    <property type="match status" value="1"/>
</dbReference>
<dbReference type="PANTHER" id="PTHR11647">
    <property type="entry name" value="HYDRANTOINASE/DIHYDROPYRIMIDINASE FAMILY MEMBER"/>
    <property type="match status" value="1"/>
</dbReference>
<dbReference type="Pfam" id="PF01979">
    <property type="entry name" value="Amidohydro_1"/>
    <property type="match status" value="1"/>
</dbReference>
<dbReference type="SUPFAM" id="SSF51338">
    <property type="entry name" value="Composite domain of metallo-dependent hydrolases"/>
    <property type="match status" value="2"/>
</dbReference>
<dbReference type="SUPFAM" id="SSF51556">
    <property type="entry name" value="Metallo-dependent hydrolases"/>
    <property type="match status" value="1"/>
</dbReference>
<gene>
    <name evidence="1" type="primary">hyuA</name>
    <name type="ordered locus">EC55989_3160</name>
</gene>
<organism>
    <name type="scientific">Escherichia coli (strain 55989 / EAEC)</name>
    <dbReference type="NCBI Taxonomy" id="585055"/>
    <lineage>
        <taxon>Bacteria</taxon>
        <taxon>Pseudomonadati</taxon>
        <taxon>Pseudomonadota</taxon>
        <taxon>Gammaproteobacteria</taxon>
        <taxon>Enterobacterales</taxon>
        <taxon>Enterobacteriaceae</taxon>
        <taxon>Escherichia</taxon>
    </lineage>
</organism>
<keyword id="KW-0378">Hydrolase</keyword>
<keyword id="KW-0479">Metal-binding</keyword>
<keyword id="KW-1185">Reference proteome</keyword>
<comment type="function">
    <text evidence="1">Catalyzes the stereospecific hydrolysis of the cyclic amide bond of D-hydantoin derivatives with an aromatic side chains at the 5'-position. Has no activity on dihydropyrimidines. The physiological function is unknown.</text>
</comment>
<comment type="catalytic activity">
    <reaction evidence="1">
        <text>D-5-phenylhydantoin + H2O = N-carbamoyl-D-phenylglycine + H(+)</text>
        <dbReference type="Rhea" id="RHEA:51664"/>
        <dbReference type="ChEBI" id="CHEBI:15377"/>
        <dbReference type="ChEBI" id="CHEBI:15378"/>
        <dbReference type="ChEBI" id="CHEBI:140750"/>
        <dbReference type="ChEBI" id="CHEBI:140758"/>
    </reaction>
</comment>
<comment type="cofactor">
    <cofactor evidence="1">
        <name>a divalent metal cation</name>
        <dbReference type="ChEBI" id="CHEBI:60240"/>
    </cofactor>
    <text evidence="1">Binds 2 divalent metal cations per subunit.</text>
</comment>
<comment type="subunit">
    <text evidence="1">Homotetramer.</text>
</comment>
<comment type="PTM">
    <text evidence="1">Carboxylation allows a single lysine to coordinate two divalent metal cations.</text>
</comment>
<comment type="similarity">
    <text evidence="1">Belongs to the metallo-dependent hydrolases superfamily. Hydantoinase/dihydropyrimidinase family.</text>
</comment>
<protein>
    <recommendedName>
        <fullName evidence="1">D-phenylhydantoinase</fullName>
        <ecNumber evidence="1">3.5.2.-</ecNumber>
    </recommendedName>
    <alternativeName>
        <fullName evidence="1">Hydantoin-utilizing enzyme HyuA</fullName>
    </alternativeName>
</protein>
<feature type="chain" id="PRO_1000186909" description="D-phenylhydantoinase">
    <location>
        <begin position="1"/>
        <end position="461"/>
    </location>
</feature>
<feature type="binding site" evidence="1">
    <location>
        <position position="59"/>
    </location>
    <ligand>
        <name>a divalent metal cation</name>
        <dbReference type="ChEBI" id="CHEBI:60240"/>
        <label>1</label>
    </ligand>
</feature>
<feature type="binding site" evidence="1">
    <location>
        <position position="61"/>
    </location>
    <ligand>
        <name>a divalent metal cation</name>
        <dbReference type="ChEBI" id="CHEBI:60240"/>
        <label>1</label>
    </ligand>
</feature>
<feature type="binding site" description="via carbamate group" evidence="1">
    <location>
        <position position="151"/>
    </location>
    <ligand>
        <name>a divalent metal cation</name>
        <dbReference type="ChEBI" id="CHEBI:60240"/>
        <label>1</label>
    </ligand>
</feature>
<feature type="binding site" description="via carbamate group" evidence="1">
    <location>
        <position position="151"/>
    </location>
    <ligand>
        <name>a divalent metal cation</name>
        <dbReference type="ChEBI" id="CHEBI:60240"/>
        <label>2</label>
    </ligand>
</feature>
<feature type="binding site" evidence="1">
    <location>
        <position position="156"/>
    </location>
    <ligand>
        <name>substrate</name>
    </ligand>
</feature>
<feature type="binding site" evidence="1">
    <location>
        <position position="182"/>
    </location>
    <ligand>
        <name>a divalent metal cation</name>
        <dbReference type="ChEBI" id="CHEBI:60240"/>
        <label>2</label>
    </ligand>
</feature>
<feature type="binding site" evidence="1">
    <location>
        <position position="239"/>
    </location>
    <ligand>
        <name>a divalent metal cation</name>
        <dbReference type="ChEBI" id="CHEBI:60240"/>
        <label>2</label>
    </ligand>
</feature>
<feature type="binding site" evidence="1">
    <location>
        <position position="286"/>
    </location>
    <ligand>
        <name>substrate</name>
    </ligand>
</feature>
<feature type="binding site" evidence="1">
    <location>
        <position position="313"/>
    </location>
    <ligand>
        <name>a divalent metal cation</name>
        <dbReference type="ChEBI" id="CHEBI:60240"/>
        <label>1</label>
    </ligand>
</feature>
<feature type="binding site" evidence="1">
    <location>
        <position position="335"/>
    </location>
    <ligand>
        <name>substrate</name>
    </ligand>
</feature>
<feature type="modified residue" description="N6-carboxylysine" evidence="1">
    <location>
        <position position="151"/>
    </location>
</feature>
<evidence type="ECO:0000255" key="1">
    <source>
        <dbReference type="HAMAP-Rule" id="MF_01644"/>
    </source>
</evidence>
<sequence length="461" mass="51057">MRVLIKNGTVVNADGQAKQDLLIESGIVRQLGNNISPQLPYEEIDATGCYVFPGGVDVHTHFNIDVGIARSCDDFFTGTRAAACGGTTTIIDHMGFGPNGCRLRHQLEVYRGYAAHKAVIDYSFHGVIQHINHAILDEIPMMVEEGLSSFKLYLTYQYKLNDDEVLQALRRLHESGALTTVHPENDAAIASKRAEFIAAGLTAPRYHALSRPLECEAEAIARMINLAQIAGNAPLYIVHLSNGLGLDYLRLARANHQPVWVETCPQYLLLDERSYDTEDGMKFILSPPLRNIREQDKLWCGISDGAIDVVATDHCTFSMAQRLQISKGDFSRCPNGLPGVENRMQLLFSSGVMTGRITPERFVELTSAMPARLFGLWPQKGLLAPGSDGDVVIIDPRQSQQIQHRHLHDNADYSPWEGFTCQGAIVRTLSRGETIFCDGTFTGKAGRGRFLRRKPFVPPVL</sequence>
<reference key="1">
    <citation type="journal article" date="2009" name="PLoS Genet.">
        <title>Organised genome dynamics in the Escherichia coli species results in highly diverse adaptive paths.</title>
        <authorList>
            <person name="Touchon M."/>
            <person name="Hoede C."/>
            <person name="Tenaillon O."/>
            <person name="Barbe V."/>
            <person name="Baeriswyl S."/>
            <person name="Bidet P."/>
            <person name="Bingen E."/>
            <person name="Bonacorsi S."/>
            <person name="Bouchier C."/>
            <person name="Bouvet O."/>
            <person name="Calteau A."/>
            <person name="Chiapello H."/>
            <person name="Clermont O."/>
            <person name="Cruveiller S."/>
            <person name="Danchin A."/>
            <person name="Diard M."/>
            <person name="Dossat C."/>
            <person name="Karoui M.E."/>
            <person name="Frapy E."/>
            <person name="Garry L."/>
            <person name="Ghigo J.M."/>
            <person name="Gilles A.M."/>
            <person name="Johnson J."/>
            <person name="Le Bouguenec C."/>
            <person name="Lescat M."/>
            <person name="Mangenot S."/>
            <person name="Martinez-Jehanne V."/>
            <person name="Matic I."/>
            <person name="Nassif X."/>
            <person name="Oztas S."/>
            <person name="Petit M.A."/>
            <person name="Pichon C."/>
            <person name="Rouy Z."/>
            <person name="Ruf C.S."/>
            <person name="Schneider D."/>
            <person name="Tourret J."/>
            <person name="Vacherie B."/>
            <person name="Vallenet D."/>
            <person name="Medigue C."/>
            <person name="Rocha E.P.C."/>
            <person name="Denamur E."/>
        </authorList>
    </citation>
    <scope>NUCLEOTIDE SEQUENCE [LARGE SCALE GENOMIC DNA]</scope>
    <source>
        <strain>55989 / EAEC</strain>
    </source>
</reference>